<gene>
    <name evidence="1" type="primary">pyrD</name>
    <name type="ordered locus">Shewmr4_1681</name>
</gene>
<evidence type="ECO:0000255" key="1">
    <source>
        <dbReference type="HAMAP-Rule" id="MF_00225"/>
    </source>
</evidence>
<name>PYRD_SHESM</name>
<comment type="function">
    <text evidence="1">Catalyzes the conversion of dihydroorotate to orotate with quinone as electron acceptor.</text>
</comment>
<comment type="catalytic activity">
    <reaction evidence="1">
        <text>(S)-dihydroorotate + a quinone = orotate + a quinol</text>
        <dbReference type="Rhea" id="RHEA:30187"/>
        <dbReference type="ChEBI" id="CHEBI:24646"/>
        <dbReference type="ChEBI" id="CHEBI:30839"/>
        <dbReference type="ChEBI" id="CHEBI:30864"/>
        <dbReference type="ChEBI" id="CHEBI:132124"/>
        <dbReference type="EC" id="1.3.5.2"/>
    </reaction>
</comment>
<comment type="cofactor">
    <cofactor evidence="1">
        <name>FMN</name>
        <dbReference type="ChEBI" id="CHEBI:58210"/>
    </cofactor>
    <text evidence="1">Binds 1 FMN per subunit.</text>
</comment>
<comment type="pathway">
    <text evidence="1">Pyrimidine metabolism; UMP biosynthesis via de novo pathway; orotate from (S)-dihydroorotate (quinone route): step 1/1.</text>
</comment>
<comment type="subunit">
    <text evidence="1">Monomer.</text>
</comment>
<comment type="subcellular location">
    <subcellularLocation>
        <location evidence="1">Cell membrane</location>
        <topology evidence="1">Peripheral membrane protein</topology>
    </subcellularLocation>
</comment>
<comment type="similarity">
    <text evidence="1">Belongs to the dihydroorotate dehydrogenase family. Type 2 subfamily.</text>
</comment>
<proteinExistence type="inferred from homology"/>
<reference key="1">
    <citation type="submission" date="2006-08" db="EMBL/GenBank/DDBJ databases">
        <title>Complete sequence of Shewanella sp. MR-4.</title>
        <authorList>
            <consortium name="US DOE Joint Genome Institute"/>
            <person name="Copeland A."/>
            <person name="Lucas S."/>
            <person name="Lapidus A."/>
            <person name="Barry K."/>
            <person name="Detter J.C."/>
            <person name="Glavina del Rio T."/>
            <person name="Hammon N."/>
            <person name="Israni S."/>
            <person name="Dalin E."/>
            <person name="Tice H."/>
            <person name="Pitluck S."/>
            <person name="Kiss H."/>
            <person name="Brettin T."/>
            <person name="Bruce D."/>
            <person name="Han C."/>
            <person name="Tapia R."/>
            <person name="Gilna P."/>
            <person name="Schmutz J."/>
            <person name="Larimer F."/>
            <person name="Land M."/>
            <person name="Hauser L."/>
            <person name="Kyrpides N."/>
            <person name="Mikhailova N."/>
            <person name="Nealson K."/>
            <person name="Konstantinidis K."/>
            <person name="Klappenbach J."/>
            <person name="Tiedje J."/>
            <person name="Richardson P."/>
        </authorList>
    </citation>
    <scope>NUCLEOTIDE SEQUENCE [LARGE SCALE GENOMIC DNA]</scope>
    <source>
        <strain>MR-4</strain>
    </source>
</reference>
<dbReference type="EC" id="1.3.5.2" evidence="1"/>
<dbReference type="EMBL" id="CP000446">
    <property type="protein sequence ID" value="ABI38757.1"/>
    <property type="molecule type" value="Genomic_DNA"/>
</dbReference>
<dbReference type="RefSeq" id="WP_011622457.1">
    <property type="nucleotide sequence ID" value="NC_008321.1"/>
</dbReference>
<dbReference type="SMR" id="Q0HJL0"/>
<dbReference type="KEGG" id="she:Shewmr4_1681"/>
<dbReference type="HOGENOM" id="CLU_013640_2_0_6"/>
<dbReference type="UniPathway" id="UPA00070">
    <property type="reaction ID" value="UER00946"/>
</dbReference>
<dbReference type="GO" id="GO:0005737">
    <property type="term" value="C:cytoplasm"/>
    <property type="evidence" value="ECO:0007669"/>
    <property type="project" value="InterPro"/>
</dbReference>
<dbReference type="GO" id="GO:0005886">
    <property type="term" value="C:plasma membrane"/>
    <property type="evidence" value="ECO:0007669"/>
    <property type="project" value="UniProtKB-SubCell"/>
</dbReference>
<dbReference type="GO" id="GO:0106430">
    <property type="term" value="F:dihydroorotate dehydrogenase (quinone) activity"/>
    <property type="evidence" value="ECO:0007669"/>
    <property type="project" value="UniProtKB-EC"/>
</dbReference>
<dbReference type="GO" id="GO:0006207">
    <property type="term" value="P:'de novo' pyrimidine nucleobase biosynthetic process"/>
    <property type="evidence" value="ECO:0007669"/>
    <property type="project" value="InterPro"/>
</dbReference>
<dbReference type="GO" id="GO:0044205">
    <property type="term" value="P:'de novo' UMP biosynthetic process"/>
    <property type="evidence" value="ECO:0007669"/>
    <property type="project" value="UniProtKB-UniRule"/>
</dbReference>
<dbReference type="CDD" id="cd04738">
    <property type="entry name" value="DHOD_2_like"/>
    <property type="match status" value="1"/>
</dbReference>
<dbReference type="FunFam" id="3.20.20.70:FF:000028">
    <property type="entry name" value="Dihydroorotate dehydrogenase (quinone)"/>
    <property type="match status" value="1"/>
</dbReference>
<dbReference type="Gene3D" id="3.20.20.70">
    <property type="entry name" value="Aldolase class I"/>
    <property type="match status" value="1"/>
</dbReference>
<dbReference type="HAMAP" id="MF_00225">
    <property type="entry name" value="DHO_dh_type2"/>
    <property type="match status" value="1"/>
</dbReference>
<dbReference type="InterPro" id="IPR013785">
    <property type="entry name" value="Aldolase_TIM"/>
</dbReference>
<dbReference type="InterPro" id="IPR050074">
    <property type="entry name" value="DHO_dehydrogenase"/>
</dbReference>
<dbReference type="InterPro" id="IPR012135">
    <property type="entry name" value="Dihydroorotate_DH_1_2"/>
</dbReference>
<dbReference type="InterPro" id="IPR005719">
    <property type="entry name" value="Dihydroorotate_DH_2"/>
</dbReference>
<dbReference type="InterPro" id="IPR005720">
    <property type="entry name" value="Dihydroorotate_DH_cat"/>
</dbReference>
<dbReference type="InterPro" id="IPR001295">
    <property type="entry name" value="Dihydroorotate_DH_CS"/>
</dbReference>
<dbReference type="NCBIfam" id="NF003644">
    <property type="entry name" value="PRK05286.1-1"/>
    <property type="match status" value="1"/>
</dbReference>
<dbReference type="NCBIfam" id="NF003645">
    <property type="entry name" value="PRK05286.1-2"/>
    <property type="match status" value="1"/>
</dbReference>
<dbReference type="NCBIfam" id="NF003646">
    <property type="entry name" value="PRK05286.1-4"/>
    <property type="match status" value="1"/>
</dbReference>
<dbReference type="NCBIfam" id="NF003652">
    <property type="entry name" value="PRK05286.2-5"/>
    <property type="match status" value="1"/>
</dbReference>
<dbReference type="NCBIfam" id="TIGR01036">
    <property type="entry name" value="pyrD_sub2"/>
    <property type="match status" value="1"/>
</dbReference>
<dbReference type="PANTHER" id="PTHR48109:SF4">
    <property type="entry name" value="DIHYDROOROTATE DEHYDROGENASE (QUINONE), MITOCHONDRIAL"/>
    <property type="match status" value="1"/>
</dbReference>
<dbReference type="PANTHER" id="PTHR48109">
    <property type="entry name" value="DIHYDROOROTATE DEHYDROGENASE (QUINONE), MITOCHONDRIAL-RELATED"/>
    <property type="match status" value="1"/>
</dbReference>
<dbReference type="Pfam" id="PF01180">
    <property type="entry name" value="DHO_dh"/>
    <property type="match status" value="1"/>
</dbReference>
<dbReference type="PIRSF" id="PIRSF000164">
    <property type="entry name" value="DHO_oxidase"/>
    <property type="match status" value="1"/>
</dbReference>
<dbReference type="SUPFAM" id="SSF51395">
    <property type="entry name" value="FMN-linked oxidoreductases"/>
    <property type="match status" value="1"/>
</dbReference>
<dbReference type="PROSITE" id="PS00911">
    <property type="entry name" value="DHODEHASE_1"/>
    <property type="match status" value="1"/>
</dbReference>
<dbReference type="PROSITE" id="PS00912">
    <property type="entry name" value="DHODEHASE_2"/>
    <property type="match status" value="1"/>
</dbReference>
<accession>Q0HJL0</accession>
<organism>
    <name type="scientific">Shewanella sp. (strain MR-4)</name>
    <dbReference type="NCBI Taxonomy" id="60480"/>
    <lineage>
        <taxon>Bacteria</taxon>
        <taxon>Pseudomonadati</taxon>
        <taxon>Pseudomonadota</taxon>
        <taxon>Gammaproteobacteria</taxon>
        <taxon>Alteromonadales</taxon>
        <taxon>Shewanellaceae</taxon>
        <taxon>Shewanella</taxon>
    </lineage>
</organism>
<keyword id="KW-1003">Cell membrane</keyword>
<keyword id="KW-0285">Flavoprotein</keyword>
<keyword id="KW-0288">FMN</keyword>
<keyword id="KW-0472">Membrane</keyword>
<keyword id="KW-0560">Oxidoreductase</keyword>
<keyword id="KW-0665">Pyrimidine biosynthesis</keyword>
<protein>
    <recommendedName>
        <fullName evidence="1">Dihydroorotate dehydrogenase (quinone)</fullName>
        <ecNumber evidence="1">1.3.5.2</ecNumber>
    </recommendedName>
    <alternativeName>
        <fullName evidence="1">DHOdehase</fullName>
        <shortName evidence="1">DHOD</shortName>
        <shortName evidence="1">DHODase</shortName>
    </alternativeName>
    <alternativeName>
        <fullName evidence="1">Dihydroorotate oxidase</fullName>
    </alternativeName>
</protein>
<sequence length="339" mass="36598">MFYKIAQKVMFQMDPERAHNLAIGSLKMTGNSPLNAFYAQNIAPAPVSFMGLTFPNPVGLAAGMDKDGESIDAFHAMGFGHVEVGTVTPRPQPGNDLPRLFRLKPAKAIINRMGFNNKGVDNLVKNLIAKKTDIMVGVNIGKNKDTPVEQGKDDYLICMDKVYPYAAYIAVNISSPNTPGLRSLQYGDLLDELLSALKTKQLELAEKHKKYVPIALKIAPDLTTEEIENIAQSLIKNKFDGAIATNTTLTRDGVSGLANANESGGLSGKPLTELSTKVIKQLATCLNGQIPIIGVGGINSAEDALAKFDAGATMVQIYSGFIYQGPKLIKEIVEAYRLK</sequence>
<feature type="chain" id="PRO_1000024227" description="Dihydroorotate dehydrogenase (quinone)">
    <location>
        <begin position="1"/>
        <end position="339"/>
    </location>
</feature>
<feature type="active site" description="Nucleophile" evidence="1">
    <location>
        <position position="175"/>
    </location>
</feature>
<feature type="binding site" evidence="1">
    <location>
        <begin position="62"/>
        <end position="66"/>
    </location>
    <ligand>
        <name>FMN</name>
        <dbReference type="ChEBI" id="CHEBI:58210"/>
    </ligand>
</feature>
<feature type="binding site" evidence="1">
    <location>
        <position position="66"/>
    </location>
    <ligand>
        <name>substrate</name>
    </ligand>
</feature>
<feature type="binding site" evidence="1">
    <location>
        <position position="86"/>
    </location>
    <ligand>
        <name>FMN</name>
        <dbReference type="ChEBI" id="CHEBI:58210"/>
    </ligand>
</feature>
<feature type="binding site" evidence="1">
    <location>
        <begin position="111"/>
        <end position="115"/>
    </location>
    <ligand>
        <name>substrate</name>
    </ligand>
</feature>
<feature type="binding site" evidence="1">
    <location>
        <position position="139"/>
    </location>
    <ligand>
        <name>FMN</name>
        <dbReference type="ChEBI" id="CHEBI:58210"/>
    </ligand>
</feature>
<feature type="binding site" evidence="1">
    <location>
        <position position="172"/>
    </location>
    <ligand>
        <name>FMN</name>
        <dbReference type="ChEBI" id="CHEBI:58210"/>
    </ligand>
</feature>
<feature type="binding site" evidence="1">
    <location>
        <position position="172"/>
    </location>
    <ligand>
        <name>substrate</name>
    </ligand>
</feature>
<feature type="binding site" evidence="1">
    <location>
        <position position="177"/>
    </location>
    <ligand>
        <name>substrate</name>
    </ligand>
</feature>
<feature type="binding site" evidence="1">
    <location>
        <position position="217"/>
    </location>
    <ligand>
        <name>FMN</name>
        <dbReference type="ChEBI" id="CHEBI:58210"/>
    </ligand>
</feature>
<feature type="binding site" evidence="1">
    <location>
        <position position="245"/>
    </location>
    <ligand>
        <name>FMN</name>
        <dbReference type="ChEBI" id="CHEBI:58210"/>
    </ligand>
</feature>
<feature type="binding site" evidence="1">
    <location>
        <begin position="246"/>
        <end position="247"/>
    </location>
    <ligand>
        <name>substrate</name>
    </ligand>
</feature>
<feature type="binding site" evidence="1">
    <location>
        <position position="268"/>
    </location>
    <ligand>
        <name>FMN</name>
        <dbReference type="ChEBI" id="CHEBI:58210"/>
    </ligand>
</feature>
<feature type="binding site" evidence="1">
    <location>
        <position position="297"/>
    </location>
    <ligand>
        <name>FMN</name>
        <dbReference type="ChEBI" id="CHEBI:58210"/>
    </ligand>
</feature>
<feature type="binding site" evidence="1">
    <location>
        <begin position="318"/>
        <end position="319"/>
    </location>
    <ligand>
        <name>FMN</name>
        <dbReference type="ChEBI" id="CHEBI:58210"/>
    </ligand>
</feature>